<keyword id="KW-0106">Calcium</keyword>
<keyword id="KW-0479">Metal-binding</keyword>
<keyword id="KW-1185">Reference proteome</keyword>
<keyword id="KW-0819">tRNA processing</keyword>
<proteinExistence type="inferred from homology"/>
<feature type="chain" id="PRO_0000285954" description="Protein archease-like">
    <location>
        <begin position="1"/>
        <end position="155"/>
    </location>
</feature>
<feature type="binding site" evidence="1">
    <location>
        <position position="26"/>
    </location>
    <ligand>
        <name>Ca(2+)</name>
        <dbReference type="ChEBI" id="CHEBI:29108"/>
    </ligand>
</feature>
<feature type="binding site" evidence="1">
    <location>
        <position position="154"/>
    </location>
    <ligand>
        <name>Ca(2+)</name>
        <dbReference type="ChEBI" id="CHEBI:29108"/>
    </ligand>
</feature>
<feature type="binding site" evidence="1">
    <location>
        <position position="155"/>
    </location>
    <ligand>
        <name>Ca(2+)</name>
        <dbReference type="ChEBI" id="CHEBI:29108"/>
    </ligand>
</feature>
<evidence type="ECO:0000250" key="1"/>
<evidence type="ECO:0000250" key="2">
    <source>
        <dbReference type="UniProtKB" id="Q8IWT0"/>
    </source>
</evidence>
<evidence type="ECO:0000305" key="3"/>
<evidence type="ECO:0000312" key="4">
    <source>
        <dbReference type="WormBase" id="CBG12466"/>
    </source>
</evidence>
<protein>
    <recommendedName>
        <fullName>Protein archease-like</fullName>
    </recommendedName>
</protein>
<organism>
    <name type="scientific">Caenorhabditis briggsae</name>
    <dbReference type="NCBI Taxonomy" id="6238"/>
    <lineage>
        <taxon>Eukaryota</taxon>
        <taxon>Metazoa</taxon>
        <taxon>Ecdysozoa</taxon>
        <taxon>Nematoda</taxon>
        <taxon>Chromadorea</taxon>
        <taxon>Rhabditida</taxon>
        <taxon>Rhabditina</taxon>
        <taxon>Rhabditomorpha</taxon>
        <taxon>Rhabditoidea</taxon>
        <taxon>Rhabditidae</taxon>
        <taxon>Peloderinae</taxon>
        <taxon>Caenorhabditis</taxon>
    </lineage>
</organism>
<accession>Q61DI9</accession>
<accession>A8XFI1</accession>
<gene>
    <name evidence="4" type="primary">arch-1</name>
    <name evidence="4" type="ORF">CBG12466</name>
</gene>
<reference key="1">
    <citation type="journal article" date="2003" name="PLoS Biol.">
        <title>The genome sequence of Caenorhabditis briggsae: a platform for comparative genomics.</title>
        <authorList>
            <person name="Stein L.D."/>
            <person name="Bao Z."/>
            <person name="Blasiar D."/>
            <person name="Blumenthal T."/>
            <person name="Brent M.R."/>
            <person name="Chen N."/>
            <person name="Chinwalla A."/>
            <person name="Clarke L."/>
            <person name="Clee C."/>
            <person name="Coghlan A."/>
            <person name="Coulson A."/>
            <person name="D'Eustachio P."/>
            <person name="Fitch D.H.A."/>
            <person name="Fulton L.A."/>
            <person name="Fulton R.E."/>
            <person name="Griffiths-Jones S."/>
            <person name="Harris T.W."/>
            <person name="Hillier L.W."/>
            <person name="Kamath R."/>
            <person name="Kuwabara P.E."/>
            <person name="Mardis E.R."/>
            <person name="Marra M.A."/>
            <person name="Miner T.L."/>
            <person name="Minx P."/>
            <person name="Mullikin J.C."/>
            <person name="Plumb R.W."/>
            <person name="Rogers J."/>
            <person name="Schein J.E."/>
            <person name="Sohrmann M."/>
            <person name="Spieth J."/>
            <person name="Stajich J.E."/>
            <person name="Wei C."/>
            <person name="Willey D."/>
            <person name="Wilson R.K."/>
            <person name="Durbin R.M."/>
            <person name="Waterston R.H."/>
        </authorList>
    </citation>
    <scope>NUCLEOTIDE SEQUENCE [LARGE SCALE GENOMIC DNA]</scope>
    <source>
        <strain>AF16</strain>
    </source>
</reference>
<comment type="function">
    <text evidence="2">Component of the tRNA-splicing ligase complex required to facilitate the enzymatic turnover of catalytic subunit RtcB.</text>
</comment>
<comment type="similarity">
    <text evidence="3">Belongs to the archease family.</text>
</comment>
<sequence>MPSTSMIEDRGEIERRRFEYLDHPADIQLHSWGTTIERAFEACLVSMFGYMTDLEKVEEQYEFYWKVSGDSMDGLLFQFLDEALNSFHAEPCFVAKRVEIMRFDKEKLEIEFRGWGESFDTSKHETEADIKSPTYSNMQIIEKSDRCDVYVIVDI</sequence>
<name>ARCH_CAEBR</name>
<dbReference type="EMBL" id="HE600913">
    <property type="protein sequence ID" value="CAP31442.1"/>
    <property type="molecule type" value="Genomic_DNA"/>
</dbReference>
<dbReference type="RefSeq" id="XP_002639738.1">
    <property type="nucleotide sequence ID" value="XM_002639692.1"/>
</dbReference>
<dbReference type="SMR" id="Q61DI9"/>
<dbReference type="FunCoup" id="Q61DI9">
    <property type="interactions" value="896"/>
</dbReference>
<dbReference type="STRING" id="6238.Q61DI9"/>
<dbReference type="EnsemblMetazoa" id="CBG12466.1">
    <property type="protein sequence ID" value="CBG12466.1"/>
    <property type="gene ID" value="WBGene00033412"/>
</dbReference>
<dbReference type="GeneID" id="8581731"/>
<dbReference type="KEGG" id="cbr:CBG_12466"/>
<dbReference type="CTD" id="8581731"/>
<dbReference type="WormBase" id="CBG12466">
    <property type="protein sequence ID" value="CBP17525"/>
    <property type="gene ID" value="WBGene00033412"/>
    <property type="gene designation" value="Cbr-arch-1"/>
</dbReference>
<dbReference type="eggNOG" id="KOG4528">
    <property type="taxonomic scope" value="Eukaryota"/>
</dbReference>
<dbReference type="HOGENOM" id="CLU_111362_0_1_1"/>
<dbReference type="InParanoid" id="Q61DI9"/>
<dbReference type="OMA" id="AITYHKM"/>
<dbReference type="OrthoDB" id="2190767at2759"/>
<dbReference type="Proteomes" id="UP000008549">
    <property type="component" value="Unassembled WGS sequence"/>
</dbReference>
<dbReference type="GO" id="GO:0072669">
    <property type="term" value="C:tRNA-splicing ligase complex"/>
    <property type="evidence" value="ECO:0000318"/>
    <property type="project" value="GO_Central"/>
</dbReference>
<dbReference type="GO" id="GO:0046872">
    <property type="term" value="F:metal ion binding"/>
    <property type="evidence" value="ECO:0007669"/>
    <property type="project" value="UniProtKB-KW"/>
</dbReference>
<dbReference type="GO" id="GO:0006388">
    <property type="term" value="P:tRNA splicing, via endonucleolytic cleavage and ligation"/>
    <property type="evidence" value="ECO:0000318"/>
    <property type="project" value="GO_Central"/>
</dbReference>
<dbReference type="FunFam" id="3.55.10.10:FF:000002">
    <property type="entry name" value="Archease, putative"/>
    <property type="match status" value="1"/>
</dbReference>
<dbReference type="Gene3D" id="3.55.10.10">
    <property type="entry name" value="Archease domain"/>
    <property type="match status" value="1"/>
</dbReference>
<dbReference type="InterPro" id="IPR002804">
    <property type="entry name" value="Archease"/>
</dbReference>
<dbReference type="InterPro" id="IPR023572">
    <property type="entry name" value="Archease_dom"/>
</dbReference>
<dbReference type="InterPro" id="IPR036820">
    <property type="entry name" value="Archease_dom_sf"/>
</dbReference>
<dbReference type="PANTHER" id="PTHR12682">
    <property type="entry name" value="ARCHEASE"/>
    <property type="match status" value="1"/>
</dbReference>
<dbReference type="PANTHER" id="PTHR12682:SF11">
    <property type="entry name" value="PROTEIN ARCHEASE"/>
    <property type="match status" value="1"/>
</dbReference>
<dbReference type="Pfam" id="PF01951">
    <property type="entry name" value="Archease"/>
    <property type="match status" value="1"/>
</dbReference>
<dbReference type="SUPFAM" id="SSF69819">
    <property type="entry name" value="MTH1598-like"/>
    <property type="match status" value="1"/>
</dbReference>